<sequence>MAKAKFERNKPHCNIGTIGHVDHGKTSLTAAITKVLAEAGGATFTAYDQIDKAPEEKARGITISTSHVEYETPNRHYAHVDCPGHADYVKNMITGAAQMDGAILVVSAADGPMPQTREHILLARQVGVPAIVVFLNKCDMVDDPELLELVEMEVRELLSKYEFPGDDIPIIKGSALAALEDSDAKLGKEAVLELMKAVDAYIPQPERPVDQPFLMPVEDVFSISGRGTVVTGRVERGIVKVGEEIEIVGIRETQKTTVTGVEMFRKLLDQGQAGDNIGALLRGTKREDVERGQVLCKPGSVKPHTKFKAEAYILTKEEGGRHTPFFTNYRPQFYFRTTDVTGVVHLPAGTEMVMPGDNVAMEVHLIVPIAMEEKLRFAIREGGRTVGAGVVASIIE</sequence>
<proteinExistence type="inferred from homology"/>
<dbReference type="EC" id="3.6.5.3" evidence="2"/>
<dbReference type="EMBL" id="CP000115">
    <property type="protein sequence ID" value="ABA04623.1"/>
    <property type="molecule type" value="Genomic_DNA"/>
</dbReference>
<dbReference type="RefSeq" id="WP_011314640.1">
    <property type="nucleotide sequence ID" value="NC_007406.1"/>
</dbReference>
<dbReference type="SMR" id="Q3SSW8"/>
<dbReference type="STRING" id="323098.Nwi_1362"/>
<dbReference type="KEGG" id="nwi:Nwi_1362"/>
<dbReference type="eggNOG" id="COG0050">
    <property type="taxonomic scope" value="Bacteria"/>
</dbReference>
<dbReference type="HOGENOM" id="CLU_007265_0_0_5"/>
<dbReference type="OrthoDB" id="9803139at2"/>
<dbReference type="Proteomes" id="UP000002531">
    <property type="component" value="Chromosome"/>
</dbReference>
<dbReference type="GO" id="GO:0005829">
    <property type="term" value="C:cytosol"/>
    <property type="evidence" value="ECO:0007669"/>
    <property type="project" value="TreeGrafter"/>
</dbReference>
<dbReference type="GO" id="GO:0005525">
    <property type="term" value="F:GTP binding"/>
    <property type="evidence" value="ECO:0007669"/>
    <property type="project" value="UniProtKB-UniRule"/>
</dbReference>
<dbReference type="GO" id="GO:0003924">
    <property type="term" value="F:GTPase activity"/>
    <property type="evidence" value="ECO:0007669"/>
    <property type="project" value="InterPro"/>
</dbReference>
<dbReference type="GO" id="GO:0097216">
    <property type="term" value="F:guanosine tetraphosphate binding"/>
    <property type="evidence" value="ECO:0007669"/>
    <property type="project" value="UniProtKB-ARBA"/>
</dbReference>
<dbReference type="GO" id="GO:0003746">
    <property type="term" value="F:translation elongation factor activity"/>
    <property type="evidence" value="ECO:0007669"/>
    <property type="project" value="UniProtKB-UniRule"/>
</dbReference>
<dbReference type="CDD" id="cd01884">
    <property type="entry name" value="EF_Tu"/>
    <property type="match status" value="1"/>
</dbReference>
<dbReference type="CDD" id="cd03697">
    <property type="entry name" value="EFTU_II"/>
    <property type="match status" value="1"/>
</dbReference>
<dbReference type="CDD" id="cd03707">
    <property type="entry name" value="EFTU_III"/>
    <property type="match status" value="1"/>
</dbReference>
<dbReference type="FunFam" id="2.40.30.10:FF:000001">
    <property type="entry name" value="Elongation factor Tu"/>
    <property type="match status" value="1"/>
</dbReference>
<dbReference type="FunFam" id="3.40.50.300:FF:000003">
    <property type="entry name" value="Elongation factor Tu"/>
    <property type="match status" value="1"/>
</dbReference>
<dbReference type="Gene3D" id="3.40.50.300">
    <property type="entry name" value="P-loop containing nucleotide triphosphate hydrolases"/>
    <property type="match status" value="1"/>
</dbReference>
<dbReference type="Gene3D" id="2.40.30.10">
    <property type="entry name" value="Translation factors"/>
    <property type="match status" value="2"/>
</dbReference>
<dbReference type="HAMAP" id="MF_00118_B">
    <property type="entry name" value="EF_Tu_B"/>
    <property type="match status" value="1"/>
</dbReference>
<dbReference type="InterPro" id="IPR041709">
    <property type="entry name" value="EF-Tu_GTP-bd"/>
</dbReference>
<dbReference type="InterPro" id="IPR050055">
    <property type="entry name" value="EF-Tu_GTPase"/>
</dbReference>
<dbReference type="InterPro" id="IPR004161">
    <property type="entry name" value="EFTu-like_2"/>
</dbReference>
<dbReference type="InterPro" id="IPR033720">
    <property type="entry name" value="EFTU_2"/>
</dbReference>
<dbReference type="InterPro" id="IPR031157">
    <property type="entry name" value="G_TR_CS"/>
</dbReference>
<dbReference type="InterPro" id="IPR027417">
    <property type="entry name" value="P-loop_NTPase"/>
</dbReference>
<dbReference type="InterPro" id="IPR005225">
    <property type="entry name" value="Small_GTP-bd"/>
</dbReference>
<dbReference type="InterPro" id="IPR000795">
    <property type="entry name" value="T_Tr_GTP-bd_dom"/>
</dbReference>
<dbReference type="InterPro" id="IPR009000">
    <property type="entry name" value="Transl_B-barrel_sf"/>
</dbReference>
<dbReference type="InterPro" id="IPR009001">
    <property type="entry name" value="Transl_elong_EF1A/Init_IF2_C"/>
</dbReference>
<dbReference type="InterPro" id="IPR004541">
    <property type="entry name" value="Transl_elong_EFTu/EF1A_bac/org"/>
</dbReference>
<dbReference type="InterPro" id="IPR004160">
    <property type="entry name" value="Transl_elong_EFTu/EF1A_C"/>
</dbReference>
<dbReference type="NCBIfam" id="TIGR00485">
    <property type="entry name" value="EF-Tu"/>
    <property type="match status" value="1"/>
</dbReference>
<dbReference type="NCBIfam" id="NF000766">
    <property type="entry name" value="PRK00049.1"/>
    <property type="match status" value="1"/>
</dbReference>
<dbReference type="NCBIfam" id="NF009372">
    <property type="entry name" value="PRK12735.1"/>
    <property type="match status" value="1"/>
</dbReference>
<dbReference type="NCBIfam" id="NF009373">
    <property type="entry name" value="PRK12736.1"/>
    <property type="match status" value="1"/>
</dbReference>
<dbReference type="NCBIfam" id="TIGR00231">
    <property type="entry name" value="small_GTP"/>
    <property type="match status" value="1"/>
</dbReference>
<dbReference type="PANTHER" id="PTHR43721:SF22">
    <property type="entry name" value="ELONGATION FACTOR TU, MITOCHONDRIAL"/>
    <property type="match status" value="1"/>
</dbReference>
<dbReference type="PANTHER" id="PTHR43721">
    <property type="entry name" value="ELONGATION FACTOR TU-RELATED"/>
    <property type="match status" value="1"/>
</dbReference>
<dbReference type="Pfam" id="PF00009">
    <property type="entry name" value="GTP_EFTU"/>
    <property type="match status" value="1"/>
</dbReference>
<dbReference type="Pfam" id="PF03144">
    <property type="entry name" value="GTP_EFTU_D2"/>
    <property type="match status" value="1"/>
</dbReference>
<dbReference type="Pfam" id="PF03143">
    <property type="entry name" value="GTP_EFTU_D3"/>
    <property type="match status" value="1"/>
</dbReference>
<dbReference type="PRINTS" id="PR00315">
    <property type="entry name" value="ELONGATNFCT"/>
</dbReference>
<dbReference type="SUPFAM" id="SSF50465">
    <property type="entry name" value="EF-Tu/eEF-1alpha/eIF2-gamma C-terminal domain"/>
    <property type="match status" value="1"/>
</dbReference>
<dbReference type="SUPFAM" id="SSF52540">
    <property type="entry name" value="P-loop containing nucleoside triphosphate hydrolases"/>
    <property type="match status" value="1"/>
</dbReference>
<dbReference type="SUPFAM" id="SSF50447">
    <property type="entry name" value="Translation proteins"/>
    <property type="match status" value="1"/>
</dbReference>
<dbReference type="PROSITE" id="PS00301">
    <property type="entry name" value="G_TR_1"/>
    <property type="match status" value="1"/>
</dbReference>
<dbReference type="PROSITE" id="PS51722">
    <property type="entry name" value="G_TR_2"/>
    <property type="match status" value="1"/>
</dbReference>
<comment type="function">
    <text evidence="2">GTP hydrolase that promotes the GTP-dependent binding of aminoacyl-tRNA to the A-site of ribosomes during protein biosynthesis.</text>
</comment>
<comment type="catalytic activity">
    <reaction evidence="2">
        <text>GTP + H2O = GDP + phosphate + H(+)</text>
        <dbReference type="Rhea" id="RHEA:19669"/>
        <dbReference type="ChEBI" id="CHEBI:15377"/>
        <dbReference type="ChEBI" id="CHEBI:15378"/>
        <dbReference type="ChEBI" id="CHEBI:37565"/>
        <dbReference type="ChEBI" id="CHEBI:43474"/>
        <dbReference type="ChEBI" id="CHEBI:58189"/>
        <dbReference type="EC" id="3.6.5.3"/>
    </reaction>
    <physiologicalReaction direction="left-to-right" evidence="2">
        <dbReference type="Rhea" id="RHEA:19670"/>
    </physiologicalReaction>
</comment>
<comment type="subunit">
    <text evidence="2">Monomer.</text>
</comment>
<comment type="subcellular location">
    <subcellularLocation>
        <location evidence="2">Cytoplasm</location>
    </subcellularLocation>
</comment>
<comment type="similarity">
    <text evidence="2">Belongs to the TRAFAC class translation factor GTPase superfamily. Classic translation factor GTPase family. EF-Tu/EF-1A subfamily.</text>
</comment>
<reference key="1">
    <citation type="journal article" date="2006" name="Appl. Environ. Microbiol.">
        <title>Genome sequence of the chemolithoautotrophic nitrite-oxidizing bacterium Nitrobacter winogradskyi Nb-255.</title>
        <authorList>
            <person name="Starkenburg S.R."/>
            <person name="Chain P.S.G."/>
            <person name="Sayavedra-Soto L.A."/>
            <person name="Hauser L."/>
            <person name="Land M.L."/>
            <person name="Larimer F.W."/>
            <person name="Malfatti S.A."/>
            <person name="Klotz M.G."/>
            <person name="Bottomley P.J."/>
            <person name="Arp D.J."/>
            <person name="Hickey W.J."/>
        </authorList>
    </citation>
    <scope>NUCLEOTIDE SEQUENCE [LARGE SCALE GENOMIC DNA]</scope>
    <source>
        <strain>ATCC 25391 / DSM 10237 / CIP 104748 / NCIMB 11846 / Nb-255</strain>
    </source>
</reference>
<gene>
    <name evidence="2" type="primary">tuf</name>
    <name type="ordered locus">Nwi_1362</name>
</gene>
<name>EFTU_NITWN</name>
<keyword id="KW-0963">Cytoplasm</keyword>
<keyword id="KW-0251">Elongation factor</keyword>
<keyword id="KW-0342">GTP-binding</keyword>
<keyword id="KW-0378">Hydrolase</keyword>
<keyword id="KW-0460">Magnesium</keyword>
<keyword id="KW-0479">Metal-binding</keyword>
<keyword id="KW-0547">Nucleotide-binding</keyword>
<keyword id="KW-0648">Protein biosynthesis</keyword>
<keyword id="KW-1185">Reference proteome</keyword>
<protein>
    <recommendedName>
        <fullName evidence="2">Elongation factor Tu</fullName>
        <shortName evidence="2">EF-Tu</shortName>
        <ecNumber evidence="2">3.6.5.3</ecNumber>
    </recommendedName>
</protein>
<feature type="chain" id="PRO_1000015713" description="Elongation factor Tu">
    <location>
        <begin position="1"/>
        <end position="396"/>
    </location>
</feature>
<feature type="domain" description="tr-type G">
    <location>
        <begin position="10"/>
        <end position="206"/>
    </location>
</feature>
<feature type="region of interest" description="G1" evidence="1">
    <location>
        <begin position="19"/>
        <end position="26"/>
    </location>
</feature>
<feature type="region of interest" description="G2" evidence="1">
    <location>
        <begin position="60"/>
        <end position="64"/>
    </location>
</feature>
<feature type="region of interest" description="G3" evidence="1">
    <location>
        <begin position="81"/>
        <end position="84"/>
    </location>
</feature>
<feature type="region of interest" description="G4" evidence="1">
    <location>
        <begin position="136"/>
        <end position="139"/>
    </location>
</feature>
<feature type="region of interest" description="G5" evidence="1">
    <location>
        <begin position="174"/>
        <end position="176"/>
    </location>
</feature>
<feature type="binding site" evidence="2">
    <location>
        <begin position="19"/>
        <end position="26"/>
    </location>
    <ligand>
        <name>GTP</name>
        <dbReference type="ChEBI" id="CHEBI:37565"/>
    </ligand>
</feature>
<feature type="binding site" evidence="2">
    <location>
        <position position="26"/>
    </location>
    <ligand>
        <name>Mg(2+)</name>
        <dbReference type="ChEBI" id="CHEBI:18420"/>
    </ligand>
</feature>
<feature type="binding site" evidence="2">
    <location>
        <begin position="81"/>
        <end position="85"/>
    </location>
    <ligand>
        <name>GTP</name>
        <dbReference type="ChEBI" id="CHEBI:37565"/>
    </ligand>
</feature>
<feature type="binding site" evidence="2">
    <location>
        <begin position="136"/>
        <end position="139"/>
    </location>
    <ligand>
        <name>GTP</name>
        <dbReference type="ChEBI" id="CHEBI:37565"/>
    </ligand>
</feature>
<accession>Q3SSW8</accession>
<organism>
    <name type="scientific">Nitrobacter winogradskyi (strain ATCC 25391 / DSM 10237 / CIP 104748 / NCIMB 11846 / Nb-255)</name>
    <dbReference type="NCBI Taxonomy" id="323098"/>
    <lineage>
        <taxon>Bacteria</taxon>
        <taxon>Pseudomonadati</taxon>
        <taxon>Pseudomonadota</taxon>
        <taxon>Alphaproteobacteria</taxon>
        <taxon>Hyphomicrobiales</taxon>
        <taxon>Nitrobacteraceae</taxon>
        <taxon>Nitrobacter</taxon>
    </lineage>
</organism>
<evidence type="ECO:0000250" key="1"/>
<evidence type="ECO:0000255" key="2">
    <source>
        <dbReference type="HAMAP-Rule" id="MF_00118"/>
    </source>
</evidence>